<proteinExistence type="inferred from homology"/>
<protein>
    <recommendedName>
        <fullName>Kappa-6-bungarotoxin</fullName>
        <shortName>K-6 bungarotoxin</shortName>
    </recommendedName>
</protein>
<dbReference type="EMBL" id="AJ223187">
    <property type="protein sequence ID" value="CAB46659.1"/>
    <property type="molecule type" value="mRNA"/>
</dbReference>
<dbReference type="SMR" id="Q9W729"/>
<dbReference type="GO" id="GO:0005576">
    <property type="term" value="C:extracellular region"/>
    <property type="evidence" value="ECO:0007669"/>
    <property type="project" value="UniProtKB-SubCell"/>
</dbReference>
<dbReference type="GO" id="GO:0030550">
    <property type="term" value="F:acetylcholine receptor inhibitor activity"/>
    <property type="evidence" value="ECO:0007669"/>
    <property type="project" value="UniProtKB-KW"/>
</dbReference>
<dbReference type="GO" id="GO:0099106">
    <property type="term" value="F:ion channel regulator activity"/>
    <property type="evidence" value="ECO:0007669"/>
    <property type="project" value="UniProtKB-KW"/>
</dbReference>
<dbReference type="GO" id="GO:0090729">
    <property type="term" value="F:toxin activity"/>
    <property type="evidence" value="ECO:0007669"/>
    <property type="project" value="UniProtKB-KW"/>
</dbReference>
<dbReference type="CDD" id="cd00206">
    <property type="entry name" value="TFP_snake_toxin"/>
    <property type="match status" value="1"/>
</dbReference>
<dbReference type="Gene3D" id="2.10.60.10">
    <property type="entry name" value="CD59"/>
    <property type="match status" value="1"/>
</dbReference>
<dbReference type="InterPro" id="IPR003571">
    <property type="entry name" value="Snake_3FTx"/>
</dbReference>
<dbReference type="InterPro" id="IPR045860">
    <property type="entry name" value="Snake_toxin-like_sf"/>
</dbReference>
<dbReference type="InterPro" id="IPR018354">
    <property type="entry name" value="Snake_toxin_con_site"/>
</dbReference>
<dbReference type="InterPro" id="IPR054131">
    <property type="entry name" value="Toxin_cobra-type"/>
</dbReference>
<dbReference type="Pfam" id="PF21947">
    <property type="entry name" value="Toxin_cobra-type"/>
    <property type="match status" value="1"/>
</dbReference>
<dbReference type="SUPFAM" id="SSF57302">
    <property type="entry name" value="Snake toxin-like"/>
    <property type="match status" value="1"/>
</dbReference>
<dbReference type="PROSITE" id="PS00272">
    <property type="entry name" value="SNAKE_TOXIN"/>
    <property type="match status" value="1"/>
</dbReference>
<organism>
    <name type="scientific">Bungarus multicinctus</name>
    <name type="common">Many-banded krait</name>
    <dbReference type="NCBI Taxonomy" id="8616"/>
    <lineage>
        <taxon>Eukaryota</taxon>
        <taxon>Metazoa</taxon>
        <taxon>Chordata</taxon>
        <taxon>Craniata</taxon>
        <taxon>Vertebrata</taxon>
        <taxon>Euteleostomi</taxon>
        <taxon>Lepidosauria</taxon>
        <taxon>Squamata</taxon>
        <taxon>Bifurcata</taxon>
        <taxon>Unidentata</taxon>
        <taxon>Episquamata</taxon>
        <taxon>Toxicofera</taxon>
        <taxon>Serpentes</taxon>
        <taxon>Colubroidea</taxon>
        <taxon>Elapidae</taxon>
        <taxon>Bungarinae</taxon>
        <taxon>Bungarus</taxon>
    </lineage>
</organism>
<evidence type="ECO:0000250" key="1"/>
<evidence type="ECO:0000250" key="2">
    <source>
        <dbReference type="UniProtKB" id="P01398"/>
    </source>
</evidence>
<evidence type="ECO:0000250" key="3">
    <source>
        <dbReference type="UniProtKB" id="P15816"/>
    </source>
</evidence>
<evidence type="ECO:0000305" key="4"/>
<keyword id="KW-0008">Acetylcholine receptor inhibiting toxin</keyword>
<keyword id="KW-1015">Disulfide bond</keyword>
<keyword id="KW-0872">Ion channel impairing toxin</keyword>
<keyword id="KW-0528">Neurotoxin</keyword>
<keyword id="KW-0629">Postsynaptic neurotoxin</keyword>
<keyword id="KW-0964">Secreted</keyword>
<keyword id="KW-0732">Signal</keyword>
<keyword id="KW-0800">Toxin</keyword>
<accession>Q9W729</accession>
<reference key="1">
    <citation type="submission" date="1998-01" db="EMBL/GenBank/DDBJ databases">
        <title>Cloning and expression of k-6 bungarotoxin.</title>
        <authorList>
            <person name="Qian Y.C."/>
            <person name="Fan C.Y."/>
            <person name="Gong Y."/>
            <person name="Yang S.-L."/>
        </authorList>
    </citation>
    <scope>NUCLEOTIDE SEQUENCE [MRNA]</scope>
    <source>
        <tissue>Venom gland</tissue>
    </source>
</reference>
<comment type="function">
    <text evidence="2">Postsynaptic neurotoxin that binds and inhibits neuronal nicotinic acetylcholine receptors (nAChR) with high affinity (IC(50)&lt;100 nM). Is a selective, and slowly reversible antagonist of alpha-3/CHRNA3-containing and some alpha-4/CHRNA4-containing AChRs.</text>
</comment>
<comment type="subunit">
    <text evidence="3">Homo- and heterodimer; non-covalently linked.</text>
</comment>
<comment type="subcellular location">
    <subcellularLocation>
        <location evidence="1">Secreted</location>
    </subcellularLocation>
</comment>
<comment type="tissue specificity">
    <text evidence="4">Expressed by the venom gland.</text>
</comment>
<comment type="similarity">
    <text evidence="4">Belongs to the three-finger toxin family. Long-chain subfamily. Kappa-neurotoxin sub-subfamily.</text>
</comment>
<sequence length="87" mass="9657">MKTLLLSLVVVTIVCLDLGYTRTCHISTSSTPQTCPKGQDICFRKTQCDKFCSIRGAVIEQGCVATCPEFRSNYRSLLCCRTDNCNP</sequence>
<feature type="signal peptide" evidence="1">
    <location>
        <begin position="1"/>
        <end position="21"/>
    </location>
</feature>
<feature type="chain" id="PRO_0000035415" description="Kappa-6-bungarotoxin">
    <location>
        <begin position="22"/>
        <end position="87"/>
    </location>
</feature>
<feature type="disulfide bond" evidence="2">
    <location>
        <begin position="24"/>
        <end position="42"/>
    </location>
</feature>
<feature type="disulfide bond" evidence="2">
    <location>
        <begin position="35"/>
        <end position="63"/>
    </location>
</feature>
<feature type="disulfide bond" evidence="2">
    <location>
        <begin position="48"/>
        <end position="52"/>
    </location>
</feature>
<feature type="disulfide bond" evidence="2">
    <location>
        <begin position="67"/>
        <end position="79"/>
    </location>
</feature>
<feature type="disulfide bond" evidence="2">
    <location>
        <begin position="80"/>
        <end position="85"/>
    </location>
</feature>
<name>3LK6_BUNMU</name>